<gene>
    <name evidence="5" type="ORF">SPAC1071.09c</name>
</gene>
<feature type="chain" id="PRO_0000310358" description="Uncharacterized J domain-containing protein SPAC1071.09c">
    <location>
        <begin position="1"/>
        <end position="255"/>
    </location>
</feature>
<feature type="domain" description="J" evidence="1">
    <location>
        <begin position="4"/>
        <end position="72"/>
    </location>
</feature>
<feature type="region of interest" description="Disordered" evidence="2">
    <location>
        <begin position="167"/>
        <end position="215"/>
    </location>
</feature>
<feature type="region of interest" description="Disordered" evidence="2">
    <location>
        <begin position="230"/>
        <end position="255"/>
    </location>
</feature>
<feature type="compositionally biased region" description="Basic residues" evidence="2">
    <location>
        <begin position="167"/>
        <end position="178"/>
    </location>
</feature>
<feature type="compositionally biased region" description="Basic residues" evidence="2">
    <location>
        <begin position="243"/>
        <end position="255"/>
    </location>
</feature>
<dbReference type="EMBL" id="CU329670">
    <property type="protein sequence ID" value="CAK9838604.1"/>
    <property type="molecule type" value="Genomic_DNA"/>
</dbReference>
<dbReference type="PIR" id="T37491">
    <property type="entry name" value="T37491"/>
</dbReference>
<dbReference type="RefSeq" id="NP_594359.1">
    <property type="nucleotide sequence ID" value="NM_001019780.2"/>
</dbReference>
<dbReference type="SMR" id="Q9UTQ5"/>
<dbReference type="BioGRID" id="279430">
    <property type="interactions" value="15"/>
</dbReference>
<dbReference type="FunCoup" id="Q9UTQ5">
    <property type="interactions" value="816"/>
</dbReference>
<dbReference type="STRING" id="284812.Q9UTQ5"/>
<dbReference type="iPTMnet" id="Q9UTQ5"/>
<dbReference type="PaxDb" id="4896-SPAC1071.09c.1"/>
<dbReference type="EnsemblFungi" id="SPAC1071.09c.1">
    <property type="protein sequence ID" value="SPAC1071.09c.1:pep"/>
    <property type="gene ID" value="SPAC1071.09c"/>
</dbReference>
<dbReference type="KEGG" id="spo:2542992"/>
<dbReference type="PomBase" id="SPAC1071.09c"/>
<dbReference type="VEuPathDB" id="FungiDB:SPAC1071.09c"/>
<dbReference type="eggNOG" id="KOG0719">
    <property type="taxonomic scope" value="Eukaryota"/>
</dbReference>
<dbReference type="HOGENOM" id="CLU_055868_0_1_1"/>
<dbReference type="InParanoid" id="Q9UTQ5"/>
<dbReference type="OMA" id="FPTWREY"/>
<dbReference type="PhylomeDB" id="Q9UTQ5"/>
<dbReference type="PRO" id="PR:Q9UTQ5"/>
<dbReference type="Proteomes" id="UP000002485">
    <property type="component" value="Chromosome I"/>
</dbReference>
<dbReference type="GO" id="GO:0005737">
    <property type="term" value="C:cytoplasm"/>
    <property type="evidence" value="ECO:0000318"/>
    <property type="project" value="GO_Central"/>
</dbReference>
<dbReference type="GO" id="GO:0005730">
    <property type="term" value="C:nucleolus"/>
    <property type="evidence" value="ECO:0007005"/>
    <property type="project" value="PomBase"/>
</dbReference>
<dbReference type="GO" id="GO:0005634">
    <property type="term" value="C:nucleus"/>
    <property type="evidence" value="ECO:0007005"/>
    <property type="project" value="PomBase"/>
</dbReference>
<dbReference type="GO" id="GO:0031072">
    <property type="term" value="F:heat shock protein binding"/>
    <property type="evidence" value="ECO:0000318"/>
    <property type="project" value="GO_Central"/>
</dbReference>
<dbReference type="GO" id="GO:0030544">
    <property type="term" value="F:Hsp70 protein binding"/>
    <property type="evidence" value="ECO:0000255"/>
    <property type="project" value="PomBase"/>
</dbReference>
<dbReference type="CDD" id="cd06257">
    <property type="entry name" value="DnaJ"/>
    <property type="match status" value="1"/>
</dbReference>
<dbReference type="Gene3D" id="1.10.287.110">
    <property type="entry name" value="DnaJ domain"/>
    <property type="match status" value="1"/>
</dbReference>
<dbReference type="InterPro" id="IPR001623">
    <property type="entry name" value="DnaJ_domain"/>
</dbReference>
<dbReference type="InterPro" id="IPR056453">
    <property type="entry name" value="HTH_DNAJC9"/>
</dbReference>
<dbReference type="InterPro" id="IPR036869">
    <property type="entry name" value="J_dom_sf"/>
</dbReference>
<dbReference type="InterPro" id="IPR052594">
    <property type="entry name" value="J_domain-containing_protein"/>
</dbReference>
<dbReference type="PANTHER" id="PTHR44144">
    <property type="entry name" value="DNAJ HOMOLOG SUBFAMILY C MEMBER 9"/>
    <property type="match status" value="1"/>
</dbReference>
<dbReference type="PANTHER" id="PTHR44144:SF1">
    <property type="entry name" value="DNAJ HOMOLOG SUBFAMILY C MEMBER 9"/>
    <property type="match status" value="1"/>
</dbReference>
<dbReference type="Pfam" id="PF00226">
    <property type="entry name" value="DnaJ"/>
    <property type="match status" value="1"/>
</dbReference>
<dbReference type="Pfam" id="PF23302">
    <property type="entry name" value="HTH_DNAJC9"/>
    <property type="match status" value="1"/>
</dbReference>
<dbReference type="PRINTS" id="PR00625">
    <property type="entry name" value="JDOMAIN"/>
</dbReference>
<dbReference type="SMART" id="SM00271">
    <property type="entry name" value="DnaJ"/>
    <property type="match status" value="1"/>
</dbReference>
<dbReference type="SUPFAM" id="SSF46565">
    <property type="entry name" value="Chaperone J-domain"/>
    <property type="match status" value="1"/>
</dbReference>
<dbReference type="PROSITE" id="PS50076">
    <property type="entry name" value="DNAJ_2"/>
    <property type="match status" value="1"/>
</dbReference>
<name>YL39_SCHPO</name>
<comment type="subcellular location">
    <subcellularLocation>
        <location evidence="3">Nucleus</location>
        <location evidence="3">Nucleolus</location>
    </subcellularLocation>
</comment>
<comment type="similarity">
    <text evidence="4">Belongs to the DnaJ family.</text>
</comment>
<evidence type="ECO:0000255" key="1">
    <source>
        <dbReference type="PROSITE-ProRule" id="PRU00286"/>
    </source>
</evidence>
<evidence type="ECO:0000256" key="2">
    <source>
        <dbReference type="SAM" id="MobiDB-lite"/>
    </source>
</evidence>
<evidence type="ECO:0000269" key="3">
    <source>
    </source>
</evidence>
<evidence type="ECO:0000305" key="4"/>
<evidence type="ECO:0000312" key="5">
    <source>
        <dbReference type="PomBase" id="SPAC1071.09c"/>
    </source>
</evidence>
<protein>
    <recommendedName>
        <fullName>Uncharacterized J domain-containing protein SPAC1071.09c</fullName>
    </recommendedName>
</protein>
<proteinExistence type="inferred from homology"/>
<sequence>MDIDPYSVLGVEKDASDELIRRAYRKKALQHHPDRIHDEEKKVEARIEFDKVAIAYGVLSDKKRRKHYDKTGQLRETDADIDFDWKEWLDELYQGVVSGETLNEFKASYQYSEEEKCDVLKAYEKGKGSMDVILEEVMCCEISDEDRFRQVINNAIKDGKISKYKRFAPNEKKRKRRAKAAEREAQEAEELSMELGLDENLKKRRKAGASDEEALSALIRSRQKSRMYNLISNLESKYSKSSTKPKKSKKSRSKE</sequence>
<keyword id="KW-0143">Chaperone</keyword>
<keyword id="KW-0539">Nucleus</keyword>
<keyword id="KW-1185">Reference proteome</keyword>
<reference key="1">
    <citation type="journal article" date="2002" name="Nature">
        <title>The genome sequence of Schizosaccharomyces pombe.</title>
        <authorList>
            <person name="Wood V."/>
            <person name="Gwilliam R."/>
            <person name="Rajandream M.A."/>
            <person name="Lyne M.H."/>
            <person name="Lyne R."/>
            <person name="Stewart A."/>
            <person name="Sgouros J.G."/>
            <person name="Peat N."/>
            <person name="Hayles J."/>
            <person name="Baker S.G."/>
            <person name="Basham D."/>
            <person name="Bowman S."/>
            <person name="Brooks K."/>
            <person name="Brown D."/>
            <person name="Brown S."/>
            <person name="Chillingworth T."/>
            <person name="Churcher C.M."/>
            <person name="Collins M."/>
            <person name="Connor R."/>
            <person name="Cronin A."/>
            <person name="Davis P."/>
            <person name="Feltwell T."/>
            <person name="Fraser A."/>
            <person name="Gentles S."/>
            <person name="Goble A."/>
            <person name="Hamlin N."/>
            <person name="Harris D.E."/>
            <person name="Hidalgo J."/>
            <person name="Hodgson G."/>
            <person name="Holroyd S."/>
            <person name="Hornsby T."/>
            <person name="Howarth S."/>
            <person name="Huckle E.J."/>
            <person name="Hunt S."/>
            <person name="Jagels K."/>
            <person name="James K.D."/>
            <person name="Jones L."/>
            <person name="Jones M."/>
            <person name="Leather S."/>
            <person name="McDonald S."/>
            <person name="McLean J."/>
            <person name="Mooney P."/>
            <person name="Moule S."/>
            <person name="Mungall K.L."/>
            <person name="Murphy L.D."/>
            <person name="Niblett D."/>
            <person name="Odell C."/>
            <person name="Oliver K."/>
            <person name="O'Neil S."/>
            <person name="Pearson D."/>
            <person name="Quail M.A."/>
            <person name="Rabbinowitsch E."/>
            <person name="Rutherford K.M."/>
            <person name="Rutter S."/>
            <person name="Saunders D."/>
            <person name="Seeger K."/>
            <person name="Sharp S."/>
            <person name="Skelton J."/>
            <person name="Simmonds M.N."/>
            <person name="Squares R."/>
            <person name="Squares S."/>
            <person name="Stevens K."/>
            <person name="Taylor K."/>
            <person name="Taylor R.G."/>
            <person name="Tivey A."/>
            <person name="Walsh S.V."/>
            <person name="Warren T."/>
            <person name="Whitehead S."/>
            <person name="Woodward J.R."/>
            <person name="Volckaert G."/>
            <person name="Aert R."/>
            <person name="Robben J."/>
            <person name="Grymonprez B."/>
            <person name="Weltjens I."/>
            <person name="Vanstreels E."/>
            <person name="Rieger M."/>
            <person name="Schaefer M."/>
            <person name="Mueller-Auer S."/>
            <person name="Gabel C."/>
            <person name="Fuchs M."/>
            <person name="Duesterhoeft A."/>
            <person name="Fritzc C."/>
            <person name="Holzer E."/>
            <person name="Moestl D."/>
            <person name="Hilbert H."/>
            <person name="Borzym K."/>
            <person name="Langer I."/>
            <person name="Beck A."/>
            <person name="Lehrach H."/>
            <person name="Reinhardt R."/>
            <person name="Pohl T.M."/>
            <person name="Eger P."/>
            <person name="Zimmermann W."/>
            <person name="Wedler H."/>
            <person name="Wambutt R."/>
            <person name="Purnelle B."/>
            <person name="Goffeau A."/>
            <person name="Cadieu E."/>
            <person name="Dreano S."/>
            <person name="Gloux S."/>
            <person name="Lelaure V."/>
            <person name="Mottier S."/>
            <person name="Galibert F."/>
            <person name="Aves S.J."/>
            <person name="Xiang Z."/>
            <person name="Hunt C."/>
            <person name="Moore K."/>
            <person name="Hurst S.M."/>
            <person name="Lucas M."/>
            <person name="Rochet M."/>
            <person name="Gaillardin C."/>
            <person name="Tallada V.A."/>
            <person name="Garzon A."/>
            <person name="Thode G."/>
            <person name="Daga R.R."/>
            <person name="Cruzado L."/>
            <person name="Jimenez J."/>
            <person name="Sanchez M."/>
            <person name="del Rey F."/>
            <person name="Benito J."/>
            <person name="Dominguez A."/>
            <person name="Revuelta J.L."/>
            <person name="Moreno S."/>
            <person name="Armstrong J."/>
            <person name="Forsburg S.L."/>
            <person name="Cerutti L."/>
            <person name="Lowe T."/>
            <person name="McCombie W.R."/>
            <person name="Paulsen I."/>
            <person name="Potashkin J."/>
            <person name="Shpakovski G.V."/>
            <person name="Ussery D."/>
            <person name="Barrell B.G."/>
            <person name="Nurse P."/>
        </authorList>
    </citation>
    <scope>NUCLEOTIDE SEQUENCE [LARGE SCALE GENOMIC DNA]</scope>
    <source>
        <strain>972 / ATCC 24843</strain>
    </source>
</reference>
<reference key="2">
    <citation type="journal article" date="2006" name="Nat. Biotechnol.">
        <title>ORFeome cloning and global analysis of protein localization in the fission yeast Schizosaccharomyces pombe.</title>
        <authorList>
            <person name="Matsuyama A."/>
            <person name="Arai R."/>
            <person name="Yashiroda Y."/>
            <person name="Shirai A."/>
            <person name="Kamata A."/>
            <person name="Sekido S."/>
            <person name="Kobayashi Y."/>
            <person name="Hashimoto A."/>
            <person name="Hamamoto M."/>
            <person name="Hiraoka Y."/>
            <person name="Horinouchi S."/>
            <person name="Yoshida M."/>
        </authorList>
    </citation>
    <scope>SUBCELLULAR LOCATION [LARGE SCALE ANALYSIS]</scope>
</reference>
<accession>Q9UTQ5</accession>
<accession>A0AAN2H7W5</accession>
<organism>
    <name type="scientific">Schizosaccharomyces pombe (strain 972 / ATCC 24843)</name>
    <name type="common">Fission yeast</name>
    <dbReference type="NCBI Taxonomy" id="284812"/>
    <lineage>
        <taxon>Eukaryota</taxon>
        <taxon>Fungi</taxon>
        <taxon>Dikarya</taxon>
        <taxon>Ascomycota</taxon>
        <taxon>Taphrinomycotina</taxon>
        <taxon>Schizosaccharomycetes</taxon>
        <taxon>Schizosaccharomycetales</taxon>
        <taxon>Schizosaccharomycetaceae</taxon>
        <taxon>Schizosaccharomyces</taxon>
    </lineage>
</organism>